<dbReference type="EMBL" id="AAFI02000223">
    <property type="protein sequence ID" value="EAL60510.1"/>
    <property type="molecule type" value="Genomic_DNA"/>
</dbReference>
<dbReference type="RefSeq" id="XP_628924.1">
    <property type="nucleotide sequence ID" value="XM_628922.1"/>
</dbReference>
<dbReference type="FunCoup" id="Q54B64">
    <property type="interactions" value="714"/>
</dbReference>
<dbReference type="GlyGen" id="Q54B64">
    <property type="glycosylation" value="2 sites"/>
</dbReference>
<dbReference type="PaxDb" id="44689-DDB0192175"/>
<dbReference type="EnsemblProtists" id="EAL60510">
    <property type="protein sequence ID" value="EAL60510"/>
    <property type="gene ID" value="DDB_G0293878"/>
</dbReference>
<dbReference type="GeneID" id="8629466"/>
<dbReference type="KEGG" id="ddi:DDB_G0293878"/>
<dbReference type="dictyBase" id="DDB_G0293878"/>
<dbReference type="VEuPathDB" id="AmoebaDB:DDB_G0293878"/>
<dbReference type="eggNOG" id="ENOG502RFUG">
    <property type="taxonomic scope" value="Eukaryota"/>
</dbReference>
<dbReference type="HOGENOM" id="CLU_251864_0_0_1"/>
<dbReference type="InParanoid" id="Q54B64"/>
<dbReference type="OMA" id="QSMSCAI"/>
<dbReference type="PRO" id="PR:Q54B64"/>
<dbReference type="Proteomes" id="UP000002195">
    <property type="component" value="Chromosome 6"/>
</dbReference>
<dbReference type="GO" id="GO:0005643">
    <property type="term" value="C:nuclear pore"/>
    <property type="evidence" value="ECO:0000318"/>
    <property type="project" value="GO_Central"/>
</dbReference>
<dbReference type="GO" id="GO:0017056">
    <property type="term" value="F:structural constituent of nuclear pore"/>
    <property type="evidence" value="ECO:0000318"/>
    <property type="project" value="GO_Central"/>
</dbReference>
<dbReference type="GO" id="GO:0006406">
    <property type="term" value="P:mRNA export from nucleus"/>
    <property type="evidence" value="ECO:0000318"/>
    <property type="project" value="GO_Central"/>
</dbReference>
<dbReference type="PANTHER" id="PTHR18898:SF2">
    <property type="entry name" value="NUCLEOPROTEIN TPR"/>
    <property type="match status" value="1"/>
</dbReference>
<dbReference type="PANTHER" id="PTHR18898">
    <property type="entry name" value="NUCLEOPROTEIN TPR-RELATED"/>
    <property type="match status" value="1"/>
</dbReference>
<evidence type="ECO:0000256" key="1">
    <source>
        <dbReference type="SAM" id="MobiDB-lite"/>
    </source>
</evidence>
<organism>
    <name type="scientific">Dictyostelium discoideum</name>
    <name type="common">Social amoeba</name>
    <dbReference type="NCBI Taxonomy" id="44689"/>
    <lineage>
        <taxon>Eukaryota</taxon>
        <taxon>Amoebozoa</taxon>
        <taxon>Evosea</taxon>
        <taxon>Eumycetozoa</taxon>
        <taxon>Dictyostelia</taxon>
        <taxon>Dictyosteliales</taxon>
        <taxon>Dictyosteliaceae</taxon>
        <taxon>Dictyostelium</taxon>
    </lineage>
</organism>
<accession>Q54B64</accession>
<reference key="1">
    <citation type="journal article" date="2005" name="Nature">
        <title>The genome of the social amoeba Dictyostelium discoideum.</title>
        <authorList>
            <person name="Eichinger L."/>
            <person name="Pachebat J.A."/>
            <person name="Gloeckner G."/>
            <person name="Rajandream M.A."/>
            <person name="Sucgang R."/>
            <person name="Berriman M."/>
            <person name="Song J."/>
            <person name="Olsen R."/>
            <person name="Szafranski K."/>
            <person name="Xu Q."/>
            <person name="Tunggal B."/>
            <person name="Kummerfeld S."/>
            <person name="Madera M."/>
            <person name="Konfortov B.A."/>
            <person name="Rivero F."/>
            <person name="Bankier A.T."/>
            <person name="Lehmann R."/>
            <person name="Hamlin N."/>
            <person name="Davies R."/>
            <person name="Gaudet P."/>
            <person name="Fey P."/>
            <person name="Pilcher K."/>
            <person name="Chen G."/>
            <person name="Saunders D."/>
            <person name="Sodergren E.J."/>
            <person name="Davis P."/>
            <person name="Kerhornou A."/>
            <person name="Nie X."/>
            <person name="Hall N."/>
            <person name="Anjard C."/>
            <person name="Hemphill L."/>
            <person name="Bason N."/>
            <person name="Farbrother P."/>
            <person name="Desany B."/>
            <person name="Just E."/>
            <person name="Morio T."/>
            <person name="Rost R."/>
            <person name="Churcher C.M."/>
            <person name="Cooper J."/>
            <person name="Haydock S."/>
            <person name="van Driessche N."/>
            <person name="Cronin A."/>
            <person name="Goodhead I."/>
            <person name="Muzny D.M."/>
            <person name="Mourier T."/>
            <person name="Pain A."/>
            <person name="Lu M."/>
            <person name="Harper D."/>
            <person name="Lindsay R."/>
            <person name="Hauser H."/>
            <person name="James K.D."/>
            <person name="Quiles M."/>
            <person name="Madan Babu M."/>
            <person name="Saito T."/>
            <person name="Buchrieser C."/>
            <person name="Wardroper A."/>
            <person name="Felder M."/>
            <person name="Thangavelu M."/>
            <person name="Johnson D."/>
            <person name="Knights A."/>
            <person name="Loulseged H."/>
            <person name="Mungall K.L."/>
            <person name="Oliver K."/>
            <person name="Price C."/>
            <person name="Quail M.A."/>
            <person name="Urushihara H."/>
            <person name="Hernandez J."/>
            <person name="Rabbinowitsch E."/>
            <person name="Steffen D."/>
            <person name="Sanders M."/>
            <person name="Ma J."/>
            <person name="Kohara Y."/>
            <person name="Sharp S."/>
            <person name="Simmonds M.N."/>
            <person name="Spiegler S."/>
            <person name="Tivey A."/>
            <person name="Sugano S."/>
            <person name="White B."/>
            <person name="Walker D."/>
            <person name="Woodward J.R."/>
            <person name="Winckler T."/>
            <person name="Tanaka Y."/>
            <person name="Shaulsky G."/>
            <person name="Schleicher M."/>
            <person name="Weinstock G.M."/>
            <person name="Rosenthal A."/>
            <person name="Cox E.C."/>
            <person name="Chisholm R.L."/>
            <person name="Gibbs R.A."/>
            <person name="Loomis W.F."/>
            <person name="Platzer M."/>
            <person name="Kay R.R."/>
            <person name="Williams J.G."/>
            <person name="Dear P.H."/>
            <person name="Noegel A.A."/>
            <person name="Barrell B.G."/>
            <person name="Kuspa A."/>
        </authorList>
    </citation>
    <scope>NUCLEOTIDE SEQUENCE [LARGE SCALE GENOMIC DNA]</scope>
    <source>
        <strain>AX4</strain>
    </source>
</reference>
<keyword id="KW-1185">Reference proteome</keyword>
<protein>
    <recommendedName>
        <fullName>Putative uncharacterized protein DDB_G0293878</fullName>
    </recommendedName>
</protein>
<sequence>MGFLTPKKTKKGKDKNESNDNSFDGGSSSYNNNNNNNNQPITYTPTAIRSPNNKTMSQSQTSIPTLSSSPSLNYPSSPPNNNNNNNNGNGNEVISIFNNSNNYNNIKYTHRLSTPPALQPQQQQAIKDLLSSTASTYSSSSPFSKLATTNGGISQPTTPISSPSQPFQSVQPNLIIPTTPTTTTTTPQSVQPIAIQQQQQQQQFPSTIQNTVPILQPLALNTIKPHQQQQQQQNQTQPLQQQQPLPLPNQQQPNQTPLQQQQSQQPNQQQQQQQQQQQQSLQNSRGEGEFENKLKKNLSVWVSPVSNKKNKLNHWQSCSDLELYNKLKIREPEFAQSMSCAISPFHYLKIQYDLESIDQSSGGNSGSGTDSFSDGFKVDLNFDGYTEWYKGMNRKVKNRIHSNGKSHHKASNDAMNNNNNNNNNNNNNNGNNSNNGNINNNGINNHSGEDKSPLKKMVKSLKSGSNSSKKEQQQLHQQLLAAQQQQQQLVHQQQQLAQQQLHQQIQKQIEIIPIKVNDEQKQHLDFLRRHESKSVVPTSPTIKGVQSGAGGGNTGNTDGVNIDNMSLDDDNNNNNNNNNNNNNNNNNNNNNNNNNNNNNNNNNNNNNNNNIAVNTPTTNATIPTNNSTTNNTNNTATPSVINGDSKQQEQPQQSQQQQPQQITPNTLLLSTDSIDLLNTLNKDSNNVDNNNNNNNIDDNNSVSREEMENILKKSQQDSNKDLGSVYGNEDSNSGSPTFQDFQSSAAASNVSGGIDDKSQTGFKKLGEKILSFFRSRKSSDSLNSSNSNIPITNISPGRQSQQQQQQHIQQISQQSQQQIQQQQQQQYVARTQSSSSIVYSSSAQQQQQQQQFQFQQNSVSSQSLQSLNGGNNNNNSNSGSINGGSNSGGGGVSNSTQQLPDQMGLFNIFTQQQQQLIMNGGLGVGGINGLVGTGVIGGDSPPPLSRSQSHASFQGKFAPVIIMEDGSLHLTPRILPFNVRGGSTNRTTPPFLTPNTSQTNLSSLVNNNNNNSSHSNNNNNNNNNTNNKNNNNNTNNSNNNNNNNNNNNINNNNNNNSNKQTANNTTNDFSFDQNTDLRSSTNSLTIGSNSNFSSLKNSLNLENPENNNNPDKNVDNNNFINENRNVEINNEKNENNESNNNDNVKVEIVQFDSINVNSNNKSLKNSFNNNNNENINNNNNENENNNKSVIYKNQQEERPIIHIDDNNLNIESVNGDKNSLRNSRDNNNSSSNNNNNNLKNSNSNNSLRNSNEKRDLNISNNNNNNNNNNNNNNNNNNNNNNNNNNNNNNNENKNKIDIDNNKSLNNSNNSGGGGSKNYRSYSNDYDLQEDIDRMNFNKLQTEIKQIFGHNSGGHRSSGGSNRHKDSIGDKEMDYYSSSDEDDDSMDDSLLSSPDPSPPHIFFFKTIHQPNKQNVKKSFAPLKFNQQNNSNNNDDLGGSILE</sequence>
<feature type="chain" id="PRO_0000343933" description="Putative uncharacterized protein DDB_G0293878">
    <location>
        <begin position="1"/>
        <end position="1441"/>
    </location>
</feature>
<feature type="region of interest" description="Disordered" evidence="1">
    <location>
        <begin position="1"/>
        <end position="95"/>
    </location>
</feature>
<feature type="region of interest" description="Disordered" evidence="1">
    <location>
        <begin position="150"/>
        <end position="204"/>
    </location>
</feature>
<feature type="region of interest" description="Disordered" evidence="1">
    <location>
        <begin position="224"/>
        <end position="289"/>
    </location>
</feature>
<feature type="region of interest" description="Disordered" evidence="1">
    <location>
        <begin position="401"/>
        <end position="477"/>
    </location>
</feature>
<feature type="region of interest" description="Disordered" evidence="1">
    <location>
        <begin position="529"/>
        <end position="661"/>
    </location>
</feature>
<feature type="region of interest" description="Disordered" evidence="1">
    <location>
        <begin position="680"/>
        <end position="760"/>
    </location>
</feature>
<feature type="region of interest" description="Disordered" evidence="1">
    <location>
        <begin position="776"/>
        <end position="810"/>
    </location>
</feature>
<feature type="region of interest" description="Disordered" evidence="1">
    <location>
        <begin position="849"/>
        <end position="899"/>
    </location>
</feature>
<feature type="region of interest" description="Disordered" evidence="1">
    <location>
        <begin position="980"/>
        <end position="1118"/>
    </location>
</feature>
<feature type="region of interest" description="Disordered" evidence="1">
    <location>
        <begin position="1161"/>
        <end position="1185"/>
    </location>
</feature>
<feature type="region of interest" description="Disordered" evidence="1">
    <location>
        <begin position="1209"/>
        <end position="1321"/>
    </location>
</feature>
<feature type="region of interest" description="Disordered" evidence="1">
    <location>
        <begin position="1348"/>
        <end position="1402"/>
    </location>
</feature>
<feature type="region of interest" description="Disordered" evidence="1">
    <location>
        <begin position="1421"/>
        <end position="1441"/>
    </location>
</feature>
<feature type="compositionally biased region" description="Low complexity" evidence="1">
    <location>
        <begin position="19"/>
        <end position="38"/>
    </location>
</feature>
<feature type="compositionally biased region" description="Polar residues" evidence="1">
    <location>
        <begin position="39"/>
        <end position="56"/>
    </location>
</feature>
<feature type="compositionally biased region" description="Low complexity" evidence="1">
    <location>
        <begin position="57"/>
        <end position="91"/>
    </location>
</feature>
<feature type="compositionally biased region" description="Low complexity" evidence="1">
    <location>
        <begin position="153"/>
        <end position="187"/>
    </location>
</feature>
<feature type="compositionally biased region" description="Low complexity" evidence="1">
    <location>
        <begin position="227"/>
        <end position="283"/>
    </location>
</feature>
<feature type="compositionally biased region" description="Low complexity" evidence="1">
    <location>
        <begin position="416"/>
        <end position="445"/>
    </location>
</feature>
<feature type="compositionally biased region" description="Low complexity" evidence="1">
    <location>
        <begin position="555"/>
        <end position="564"/>
    </location>
</feature>
<feature type="compositionally biased region" description="Low complexity" evidence="1">
    <location>
        <begin position="572"/>
        <end position="635"/>
    </location>
</feature>
<feature type="compositionally biased region" description="Polar residues" evidence="1">
    <location>
        <begin position="636"/>
        <end position="645"/>
    </location>
</feature>
<feature type="compositionally biased region" description="Low complexity" evidence="1">
    <location>
        <begin position="648"/>
        <end position="661"/>
    </location>
</feature>
<feature type="compositionally biased region" description="Low complexity" evidence="1">
    <location>
        <begin position="680"/>
        <end position="700"/>
    </location>
</feature>
<feature type="compositionally biased region" description="Basic and acidic residues" evidence="1">
    <location>
        <begin position="703"/>
        <end position="720"/>
    </location>
</feature>
<feature type="compositionally biased region" description="Polar residues" evidence="1">
    <location>
        <begin position="729"/>
        <end position="751"/>
    </location>
</feature>
<feature type="compositionally biased region" description="Low complexity" evidence="1">
    <location>
        <begin position="780"/>
        <end position="810"/>
    </location>
</feature>
<feature type="compositionally biased region" description="Low complexity" evidence="1">
    <location>
        <begin position="849"/>
        <end position="880"/>
    </location>
</feature>
<feature type="compositionally biased region" description="Gly residues" evidence="1">
    <location>
        <begin position="881"/>
        <end position="892"/>
    </location>
</feature>
<feature type="compositionally biased region" description="Polar residues" evidence="1">
    <location>
        <begin position="981"/>
        <end position="994"/>
    </location>
</feature>
<feature type="compositionally biased region" description="Low complexity" evidence="1">
    <location>
        <begin position="995"/>
        <end position="1067"/>
    </location>
</feature>
<feature type="compositionally biased region" description="Polar residues" evidence="1">
    <location>
        <begin position="1068"/>
        <end position="1087"/>
    </location>
</feature>
<feature type="compositionally biased region" description="Low complexity" evidence="1">
    <location>
        <begin position="1088"/>
        <end position="1118"/>
    </location>
</feature>
<feature type="compositionally biased region" description="Low complexity" evidence="1">
    <location>
        <begin position="1225"/>
        <end position="1249"/>
    </location>
</feature>
<feature type="compositionally biased region" description="Low complexity" evidence="1">
    <location>
        <begin position="1257"/>
        <end position="1291"/>
    </location>
</feature>
<feature type="compositionally biased region" description="Basic and acidic residues" evidence="1">
    <location>
        <begin position="1362"/>
        <end position="1373"/>
    </location>
</feature>
<gene>
    <name type="ORF">DDB_G0293878</name>
</gene>
<proteinExistence type="predicted"/>
<name>Y2175_DICDI</name>